<feature type="chain" id="PRO_0000259313" description="D-aminoacyl-tRNA deacylase">
    <location>
        <begin position="1"/>
        <end position="145"/>
    </location>
</feature>
<feature type="short sequence motif" description="Gly-cisPro motif, important for rejection of L-amino acids" evidence="1">
    <location>
        <begin position="137"/>
        <end position="138"/>
    </location>
</feature>
<dbReference type="EC" id="3.1.1.96" evidence="1"/>
<dbReference type="EMBL" id="CP000038">
    <property type="protein sequence ID" value="AAZ90573.1"/>
    <property type="molecule type" value="Genomic_DNA"/>
</dbReference>
<dbReference type="RefSeq" id="WP_000560983.1">
    <property type="nucleotide sequence ID" value="NC_007384.1"/>
</dbReference>
<dbReference type="SMR" id="Q3YV89"/>
<dbReference type="GeneID" id="93778051"/>
<dbReference type="KEGG" id="ssn:SSON_4056"/>
<dbReference type="HOGENOM" id="CLU_076901_1_0_6"/>
<dbReference type="Proteomes" id="UP000002529">
    <property type="component" value="Chromosome"/>
</dbReference>
<dbReference type="GO" id="GO:0005737">
    <property type="term" value="C:cytoplasm"/>
    <property type="evidence" value="ECO:0007669"/>
    <property type="project" value="UniProtKB-SubCell"/>
</dbReference>
<dbReference type="GO" id="GO:0051500">
    <property type="term" value="F:D-tyrosyl-tRNA(Tyr) deacylase activity"/>
    <property type="evidence" value="ECO:0007669"/>
    <property type="project" value="TreeGrafter"/>
</dbReference>
<dbReference type="GO" id="GO:0106026">
    <property type="term" value="F:Gly-tRNA(Ala) deacylase activity"/>
    <property type="evidence" value="ECO:0007669"/>
    <property type="project" value="UniProtKB-UniRule"/>
</dbReference>
<dbReference type="GO" id="GO:0043908">
    <property type="term" value="F:Ser(Gly)-tRNA(Ala) hydrolase activity"/>
    <property type="evidence" value="ECO:0007669"/>
    <property type="project" value="UniProtKB-UniRule"/>
</dbReference>
<dbReference type="GO" id="GO:0000049">
    <property type="term" value="F:tRNA binding"/>
    <property type="evidence" value="ECO:0007669"/>
    <property type="project" value="UniProtKB-UniRule"/>
</dbReference>
<dbReference type="GO" id="GO:0019478">
    <property type="term" value="P:D-amino acid catabolic process"/>
    <property type="evidence" value="ECO:0007669"/>
    <property type="project" value="UniProtKB-UniRule"/>
</dbReference>
<dbReference type="CDD" id="cd00563">
    <property type="entry name" value="Dtyr_deacylase"/>
    <property type="match status" value="1"/>
</dbReference>
<dbReference type="FunFam" id="3.50.80.10:FF:000001">
    <property type="entry name" value="D-aminoacyl-tRNA deacylase"/>
    <property type="match status" value="1"/>
</dbReference>
<dbReference type="Gene3D" id="3.50.80.10">
    <property type="entry name" value="D-tyrosyl-tRNA(Tyr) deacylase"/>
    <property type="match status" value="1"/>
</dbReference>
<dbReference type="HAMAP" id="MF_00518">
    <property type="entry name" value="Deacylase_Dtd"/>
    <property type="match status" value="1"/>
</dbReference>
<dbReference type="InterPro" id="IPR003732">
    <property type="entry name" value="Daa-tRNA_deacyls_DTD"/>
</dbReference>
<dbReference type="InterPro" id="IPR023509">
    <property type="entry name" value="DTD-like_sf"/>
</dbReference>
<dbReference type="NCBIfam" id="TIGR00256">
    <property type="entry name" value="D-aminoacyl-tRNA deacylase"/>
    <property type="match status" value="1"/>
</dbReference>
<dbReference type="PANTHER" id="PTHR10472:SF5">
    <property type="entry name" value="D-AMINOACYL-TRNA DEACYLASE 1"/>
    <property type="match status" value="1"/>
</dbReference>
<dbReference type="PANTHER" id="PTHR10472">
    <property type="entry name" value="D-TYROSYL-TRNA TYR DEACYLASE"/>
    <property type="match status" value="1"/>
</dbReference>
<dbReference type="Pfam" id="PF02580">
    <property type="entry name" value="Tyr_Deacylase"/>
    <property type="match status" value="1"/>
</dbReference>
<dbReference type="SUPFAM" id="SSF69500">
    <property type="entry name" value="DTD-like"/>
    <property type="match status" value="1"/>
</dbReference>
<organism>
    <name type="scientific">Shigella sonnei (strain Ss046)</name>
    <dbReference type="NCBI Taxonomy" id="300269"/>
    <lineage>
        <taxon>Bacteria</taxon>
        <taxon>Pseudomonadati</taxon>
        <taxon>Pseudomonadota</taxon>
        <taxon>Gammaproteobacteria</taxon>
        <taxon>Enterobacterales</taxon>
        <taxon>Enterobacteriaceae</taxon>
        <taxon>Shigella</taxon>
    </lineage>
</organism>
<evidence type="ECO:0000255" key="1">
    <source>
        <dbReference type="HAMAP-Rule" id="MF_00518"/>
    </source>
</evidence>
<gene>
    <name evidence="1" type="primary">dtd</name>
    <name type="ordered locus">SSON_4056</name>
</gene>
<sequence length="145" mass="15950">MIALIQRVTRASVTVEGEVTGEIGAGLLVLLGVEKDDDEQKANRLCERVLGYRIFSDAEGKMNLNVQQAGGSVLVVSQFTLAADTERGMRPSFSKGASPDRAEALYDYFVERCRQQEMNTQTGRFAADMQVSLVNDGPVTFWLQV</sequence>
<proteinExistence type="inferred from homology"/>
<keyword id="KW-0963">Cytoplasm</keyword>
<keyword id="KW-0378">Hydrolase</keyword>
<keyword id="KW-1185">Reference proteome</keyword>
<keyword id="KW-0694">RNA-binding</keyword>
<keyword id="KW-0820">tRNA-binding</keyword>
<protein>
    <recommendedName>
        <fullName evidence="1">D-aminoacyl-tRNA deacylase</fullName>
        <shortName evidence="1">DTD</shortName>
        <ecNumber evidence="1">3.1.1.96</ecNumber>
    </recommendedName>
    <alternativeName>
        <fullName evidence="1">Gly-tRNA(Ala) deacylase</fullName>
    </alternativeName>
</protein>
<reference key="1">
    <citation type="journal article" date="2005" name="Nucleic Acids Res.">
        <title>Genome dynamics and diversity of Shigella species, the etiologic agents of bacillary dysentery.</title>
        <authorList>
            <person name="Yang F."/>
            <person name="Yang J."/>
            <person name="Zhang X."/>
            <person name="Chen L."/>
            <person name="Jiang Y."/>
            <person name="Yan Y."/>
            <person name="Tang X."/>
            <person name="Wang J."/>
            <person name="Xiong Z."/>
            <person name="Dong J."/>
            <person name="Xue Y."/>
            <person name="Zhu Y."/>
            <person name="Xu X."/>
            <person name="Sun L."/>
            <person name="Chen S."/>
            <person name="Nie H."/>
            <person name="Peng J."/>
            <person name="Xu J."/>
            <person name="Wang Y."/>
            <person name="Yuan Z."/>
            <person name="Wen Y."/>
            <person name="Yao Z."/>
            <person name="Shen Y."/>
            <person name="Qiang B."/>
            <person name="Hou Y."/>
            <person name="Yu J."/>
            <person name="Jin Q."/>
        </authorList>
    </citation>
    <scope>NUCLEOTIDE SEQUENCE [LARGE SCALE GENOMIC DNA]</scope>
    <source>
        <strain>Ss046</strain>
    </source>
</reference>
<comment type="function">
    <text evidence="1">An aminoacyl-tRNA editing enzyme that deacylates mischarged D-aminoacyl-tRNAs. Also deacylates mischarged glycyl-tRNA(Ala), protecting cells against glycine mischarging by AlaRS. Acts via tRNA-based rather than protein-based catalysis; rejects L-amino acids rather than detecting D-amino acids in the active site. By recycling D-aminoacyl-tRNA to D-amino acids and free tRNA molecules, this enzyme counteracts the toxicity associated with the formation of D-aminoacyl-tRNA entities in vivo and helps enforce protein L-homochirality.</text>
</comment>
<comment type="catalytic activity">
    <reaction evidence="1">
        <text>glycyl-tRNA(Ala) + H2O = tRNA(Ala) + glycine + H(+)</text>
        <dbReference type="Rhea" id="RHEA:53744"/>
        <dbReference type="Rhea" id="RHEA-COMP:9657"/>
        <dbReference type="Rhea" id="RHEA-COMP:13640"/>
        <dbReference type="ChEBI" id="CHEBI:15377"/>
        <dbReference type="ChEBI" id="CHEBI:15378"/>
        <dbReference type="ChEBI" id="CHEBI:57305"/>
        <dbReference type="ChEBI" id="CHEBI:78442"/>
        <dbReference type="ChEBI" id="CHEBI:78522"/>
        <dbReference type="EC" id="3.1.1.96"/>
    </reaction>
</comment>
<comment type="catalytic activity">
    <reaction evidence="1">
        <text>a D-aminoacyl-tRNA + H2O = a tRNA + a D-alpha-amino acid + H(+)</text>
        <dbReference type="Rhea" id="RHEA:13953"/>
        <dbReference type="Rhea" id="RHEA-COMP:10123"/>
        <dbReference type="Rhea" id="RHEA-COMP:10124"/>
        <dbReference type="ChEBI" id="CHEBI:15377"/>
        <dbReference type="ChEBI" id="CHEBI:15378"/>
        <dbReference type="ChEBI" id="CHEBI:59871"/>
        <dbReference type="ChEBI" id="CHEBI:78442"/>
        <dbReference type="ChEBI" id="CHEBI:79333"/>
        <dbReference type="EC" id="3.1.1.96"/>
    </reaction>
</comment>
<comment type="subunit">
    <text evidence="1">Homodimer.</text>
</comment>
<comment type="subcellular location">
    <subcellularLocation>
        <location evidence="1">Cytoplasm</location>
    </subcellularLocation>
</comment>
<comment type="domain">
    <text evidence="1">A Gly-cisPro motif from one monomer fits into the active site of the other monomer to allow specific chiral rejection of L-amino acids.</text>
</comment>
<comment type="similarity">
    <text evidence="1">Belongs to the DTD family.</text>
</comment>
<accession>Q3YV89</accession>
<name>DTD_SHISS</name>